<organism>
    <name type="scientific">Bos taurus</name>
    <name type="common">Bovine</name>
    <dbReference type="NCBI Taxonomy" id="9913"/>
    <lineage>
        <taxon>Eukaryota</taxon>
        <taxon>Metazoa</taxon>
        <taxon>Chordata</taxon>
        <taxon>Craniata</taxon>
        <taxon>Vertebrata</taxon>
        <taxon>Euteleostomi</taxon>
        <taxon>Mammalia</taxon>
        <taxon>Eutheria</taxon>
        <taxon>Laurasiatheria</taxon>
        <taxon>Artiodactyla</taxon>
        <taxon>Ruminantia</taxon>
        <taxon>Pecora</taxon>
        <taxon>Bovidae</taxon>
        <taxon>Bovinae</taxon>
        <taxon>Bos</taxon>
    </lineage>
</organism>
<comment type="function">
    <text evidence="4">Catalyzes the phosphorylation of pyrimidine nucleoside monophosphates at the expense of ATP. Plays an important role in de novo pyrimidine nucleotide biosynthesis. Has preference for UMP and CMP as phosphate acceptors. Also displays broad nucleoside diphosphate kinase activity.</text>
</comment>
<comment type="catalytic activity">
    <reaction evidence="4">
        <text>CMP + ATP = CDP + ADP</text>
        <dbReference type="Rhea" id="RHEA:11600"/>
        <dbReference type="ChEBI" id="CHEBI:30616"/>
        <dbReference type="ChEBI" id="CHEBI:58069"/>
        <dbReference type="ChEBI" id="CHEBI:60377"/>
        <dbReference type="ChEBI" id="CHEBI:456216"/>
        <dbReference type="EC" id="2.7.4.14"/>
    </reaction>
</comment>
<comment type="catalytic activity">
    <reaction evidence="4">
        <text>dCMP + ATP = dCDP + ADP</text>
        <dbReference type="Rhea" id="RHEA:25094"/>
        <dbReference type="ChEBI" id="CHEBI:30616"/>
        <dbReference type="ChEBI" id="CHEBI:57566"/>
        <dbReference type="ChEBI" id="CHEBI:58593"/>
        <dbReference type="ChEBI" id="CHEBI:456216"/>
        <dbReference type="EC" id="2.7.4.14"/>
    </reaction>
</comment>
<comment type="catalytic activity">
    <reaction evidence="4">
        <text>UMP + ATP = UDP + ADP</text>
        <dbReference type="Rhea" id="RHEA:24400"/>
        <dbReference type="ChEBI" id="CHEBI:30616"/>
        <dbReference type="ChEBI" id="CHEBI:57865"/>
        <dbReference type="ChEBI" id="CHEBI:58223"/>
        <dbReference type="ChEBI" id="CHEBI:456216"/>
        <dbReference type="EC" id="2.7.4.14"/>
    </reaction>
</comment>
<comment type="catalytic activity">
    <reaction evidence="4">
        <text>a 2'-deoxyribonucleoside 5'-diphosphate + ATP = a 2'-deoxyribonucleoside 5'-triphosphate + ADP</text>
        <dbReference type="Rhea" id="RHEA:44640"/>
        <dbReference type="ChEBI" id="CHEBI:30616"/>
        <dbReference type="ChEBI" id="CHEBI:61560"/>
        <dbReference type="ChEBI" id="CHEBI:73316"/>
        <dbReference type="ChEBI" id="CHEBI:456216"/>
        <dbReference type="EC" id="2.7.4.6"/>
    </reaction>
</comment>
<comment type="catalytic activity">
    <reaction evidence="4">
        <text>a ribonucleoside 5'-diphosphate + ATP = a ribonucleoside 5'-triphosphate + ADP</text>
        <dbReference type="Rhea" id="RHEA:18113"/>
        <dbReference type="ChEBI" id="CHEBI:30616"/>
        <dbReference type="ChEBI" id="CHEBI:57930"/>
        <dbReference type="ChEBI" id="CHEBI:61557"/>
        <dbReference type="ChEBI" id="CHEBI:456216"/>
        <dbReference type="EC" id="2.7.4.6"/>
    </reaction>
</comment>
<comment type="cofactor">
    <cofactor evidence="4">
        <name>Mg(2+)</name>
        <dbReference type="ChEBI" id="CHEBI:18420"/>
    </cofactor>
    <text evidence="4">Binds 1 Mg(2+) ion per monomer.</text>
</comment>
<comment type="subunit">
    <text evidence="4">Monomer.</text>
</comment>
<comment type="subcellular location">
    <subcellularLocation>
        <location evidence="4">Nucleus</location>
    </subcellularLocation>
    <subcellularLocation>
        <location evidence="4">Cytoplasm</location>
    </subcellularLocation>
    <text evidence="4">Predominantly nuclear.</text>
</comment>
<comment type="domain">
    <text evidence="4">Consists of three domains, a large central CORE domain and two small peripheral domains, NMPbind and LID, which undergo movements during catalysis. The LID domain closes over the site of phosphoryl transfer upon ATP binding. Assembling and dissambling the active center during each catalytic cycle provides an effective means to prevent ATP hydrolysis.</text>
</comment>
<comment type="similarity">
    <text evidence="4">Belongs to the adenylate kinase family. UMP-CMP kinase subfamily.</text>
</comment>
<comment type="sequence caution" evidence="5">
    <conflict type="erroneous initiation">
        <sequence resource="EMBL-CDS" id="AAI12479"/>
    </conflict>
</comment>
<evidence type="ECO:0000250" key="1">
    <source>
        <dbReference type="UniProtKB" id="P30085"/>
    </source>
</evidence>
<evidence type="ECO:0000250" key="2">
    <source>
        <dbReference type="UniProtKB" id="Q4KM73"/>
    </source>
</evidence>
<evidence type="ECO:0000250" key="3">
    <source>
        <dbReference type="UniProtKB" id="Q9DBP5"/>
    </source>
</evidence>
<evidence type="ECO:0000255" key="4">
    <source>
        <dbReference type="HAMAP-Rule" id="MF_03172"/>
    </source>
</evidence>
<evidence type="ECO:0000305" key="5"/>
<feature type="chain" id="PRO_0000292023" description="UMP-CMP kinase">
    <location>
        <begin position="1"/>
        <end position="196"/>
    </location>
</feature>
<feature type="region of interest" description="NMP" evidence="4">
    <location>
        <begin position="33"/>
        <end position="63"/>
    </location>
</feature>
<feature type="region of interest" description="LID" evidence="4">
    <location>
        <begin position="133"/>
        <end position="143"/>
    </location>
</feature>
<feature type="binding site" evidence="4">
    <location>
        <begin position="13"/>
        <end position="18"/>
    </location>
    <ligand>
        <name>ATP</name>
        <dbReference type="ChEBI" id="CHEBI:30616"/>
    </ligand>
</feature>
<feature type="binding site" evidence="4">
    <location>
        <position position="39"/>
    </location>
    <ligand>
        <name>a ribonucleoside 5'-phosphate</name>
        <dbReference type="ChEBI" id="CHEBI:58043"/>
    </ligand>
</feature>
<feature type="binding site" evidence="4">
    <location>
        <begin position="61"/>
        <end position="63"/>
    </location>
    <ligand>
        <name>a ribonucleoside 5'-phosphate</name>
        <dbReference type="ChEBI" id="CHEBI:58043"/>
    </ligand>
</feature>
<feature type="binding site" evidence="4">
    <location>
        <begin position="93"/>
        <end position="96"/>
    </location>
    <ligand>
        <name>a ribonucleoside 5'-phosphate</name>
        <dbReference type="ChEBI" id="CHEBI:58043"/>
    </ligand>
</feature>
<feature type="binding site" evidence="4">
    <location>
        <position position="100"/>
    </location>
    <ligand>
        <name>CMP</name>
        <dbReference type="ChEBI" id="CHEBI:60377"/>
    </ligand>
</feature>
<feature type="binding site" evidence="4">
    <location>
        <position position="134"/>
    </location>
    <ligand>
        <name>ATP</name>
        <dbReference type="ChEBI" id="CHEBI:30616"/>
    </ligand>
</feature>
<feature type="binding site" evidence="4">
    <location>
        <position position="140"/>
    </location>
    <ligand>
        <name>a ribonucleoside 5'-phosphate</name>
        <dbReference type="ChEBI" id="CHEBI:58043"/>
    </ligand>
</feature>
<feature type="binding site" evidence="4">
    <location>
        <position position="151"/>
    </location>
    <ligand>
        <name>a ribonucleoside 5'-phosphate</name>
        <dbReference type="ChEBI" id="CHEBI:58043"/>
    </ligand>
</feature>
<feature type="binding site" evidence="4">
    <location>
        <position position="179"/>
    </location>
    <ligand>
        <name>ATP</name>
        <dbReference type="ChEBI" id="CHEBI:30616"/>
    </ligand>
</feature>
<feature type="modified residue" description="Phosphoserine" evidence="1">
    <location>
        <position position="33"/>
    </location>
</feature>
<feature type="modified residue" description="N6-acetyllysine" evidence="3">
    <location>
        <position position="43"/>
    </location>
</feature>
<feature type="modified residue" description="N6-acetyllysine" evidence="1">
    <location>
        <position position="55"/>
    </location>
</feature>
<feature type="modified residue" description="N6-succinyllysine" evidence="3">
    <location>
        <position position="106"/>
    </location>
</feature>
<feature type="modified residue" description="Phosphoserine" evidence="2">
    <location>
        <position position="180"/>
    </location>
</feature>
<proteinExistence type="evidence at transcript level"/>
<keyword id="KW-0007">Acetylation</keyword>
<keyword id="KW-0067">ATP-binding</keyword>
<keyword id="KW-0963">Cytoplasm</keyword>
<keyword id="KW-0418">Kinase</keyword>
<keyword id="KW-0547">Nucleotide-binding</keyword>
<keyword id="KW-0539">Nucleus</keyword>
<keyword id="KW-0597">Phosphoprotein</keyword>
<keyword id="KW-0665">Pyrimidine biosynthesis</keyword>
<keyword id="KW-1185">Reference proteome</keyword>
<keyword id="KW-0808">Transferase</keyword>
<gene>
    <name evidence="4" type="primary">CMPK1</name>
    <name evidence="4" type="synonym">CMPK</name>
</gene>
<dbReference type="EC" id="2.7.4.14" evidence="4"/>
<dbReference type="EC" id="2.7.4.6" evidence="4"/>
<dbReference type="EMBL" id="BC112478">
    <property type="protein sequence ID" value="AAI12479.1"/>
    <property type="status" value="ALT_INIT"/>
    <property type="molecule type" value="mRNA"/>
</dbReference>
<dbReference type="RefSeq" id="NP_001039509.1">
    <property type="nucleotide sequence ID" value="NM_001046044.1"/>
</dbReference>
<dbReference type="SMR" id="Q2KIW9"/>
<dbReference type="FunCoup" id="Q2KIW9">
    <property type="interactions" value="2168"/>
</dbReference>
<dbReference type="STRING" id="9913.ENSBTAP00000026582"/>
<dbReference type="PaxDb" id="9913-ENSBTAP00000026582"/>
<dbReference type="PeptideAtlas" id="Q2KIW9"/>
<dbReference type="GeneID" id="509965"/>
<dbReference type="KEGG" id="bta:509965"/>
<dbReference type="CTD" id="51727"/>
<dbReference type="eggNOG" id="KOG3079">
    <property type="taxonomic scope" value="Eukaryota"/>
</dbReference>
<dbReference type="HOGENOM" id="CLU_032354_0_2_1"/>
<dbReference type="InParanoid" id="Q2KIW9"/>
<dbReference type="OrthoDB" id="442176at2759"/>
<dbReference type="TreeFam" id="TF354283"/>
<dbReference type="Proteomes" id="UP000009136">
    <property type="component" value="Unplaced"/>
</dbReference>
<dbReference type="GO" id="GO:0005737">
    <property type="term" value="C:cytoplasm"/>
    <property type="evidence" value="ECO:0000318"/>
    <property type="project" value="GO_Central"/>
</dbReference>
<dbReference type="GO" id="GO:0005634">
    <property type="term" value="C:nucleus"/>
    <property type="evidence" value="ECO:0000318"/>
    <property type="project" value="GO_Central"/>
</dbReference>
<dbReference type="GO" id="GO:0004127">
    <property type="term" value="F:(d)CMP kinase activity"/>
    <property type="evidence" value="ECO:0000318"/>
    <property type="project" value="GO_Central"/>
</dbReference>
<dbReference type="GO" id="GO:0005524">
    <property type="term" value="F:ATP binding"/>
    <property type="evidence" value="ECO:0007669"/>
    <property type="project" value="UniProtKB-KW"/>
</dbReference>
<dbReference type="GO" id="GO:0036430">
    <property type="term" value="F:CMP kinase activity"/>
    <property type="evidence" value="ECO:0007669"/>
    <property type="project" value="RHEA"/>
</dbReference>
<dbReference type="GO" id="GO:0036431">
    <property type="term" value="F:dCMP kinase activity"/>
    <property type="evidence" value="ECO:0007669"/>
    <property type="project" value="RHEA"/>
</dbReference>
<dbReference type="GO" id="GO:0004550">
    <property type="term" value="F:nucleoside diphosphate kinase activity"/>
    <property type="evidence" value="ECO:0000250"/>
    <property type="project" value="UniProtKB"/>
</dbReference>
<dbReference type="GO" id="GO:0033862">
    <property type="term" value="F:UMP kinase activity"/>
    <property type="evidence" value="ECO:0000318"/>
    <property type="project" value="GO_Central"/>
</dbReference>
<dbReference type="GO" id="GO:0006207">
    <property type="term" value="P:'de novo' pyrimidine nucleobase biosynthetic process"/>
    <property type="evidence" value="ECO:0007669"/>
    <property type="project" value="InterPro"/>
</dbReference>
<dbReference type="GO" id="GO:0046705">
    <property type="term" value="P:CDP biosynthetic process"/>
    <property type="evidence" value="ECO:0000318"/>
    <property type="project" value="GO_Central"/>
</dbReference>
<dbReference type="GO" id="GO:0006225">
    <property type="term" value="P:UDP biosynthetic process"/>
    <property type="evidence" value="ECO:0000318"/>
    <property type="project" value="GO_Central"/>
</dbReference>
<dbReference type="CDD" id="cd01428">
    <property type="entry name" value="ADK"/>
    <property type="match status" value="1"/>
</dbReference>
<dbReference type="FunFam" id="3.40.50.300:FF:000315">
    <property type="entry name" value="Adenylate kinase 1"/>
    <property type="match status" value="1"/>
</dbReference>
<dbReference type="Gene3D" id="3.40.50.300">
    <property type="entry name" value="P-loop containing nucleotide triphosphate hydrolases"/>
    <property type="match status" value="1"/>
</dbReference>
<dbReference type="HAMAP" id="MF_00235">
    <property type="entry name" value="Adenylate_kinase_Adk"/>
    <property type="match status" value="1"/>
</dbReference>
<dbReference type="HAMAP" id="MF_03172">
    <property type="entry name" value="Adenylate_kinase_UMP_CMP_kin"/>
    <property type="match status" value="1"/>
</dbReference>
<dbReference type="InterPro" id="IPR000850">
    <property type="entry name" value="Adenylat/UMP-CMP_kin"/>
</dbReference>
<dbReference type="InterPro" id="IPR033690">
    <property type="entry name" value="Adenylat_kinase_CS"/>
</dbReference>
<dbReference type="InterPro" id="IPR027417">
    <property type="entry name" value="P-loop_NTPase"/>
</dbReference>
<dbReference type="InterPro" id="IPR006266">
    <property type="entry name" value="UMP_CMP_kinase"/>
</dbReference>
<dbReference type="NCBIfam" id="TIGR01359">
    <property type="entry name" value="UMP_CMP_kin_fam"/>
    <property type="match status" value="1"/>
</dbReference>
<dbReference type="PANTHER" id="PTHR23359">
    <property type="entry name" value="NUCLEOTIDE KINASE"/>
    <property type="match status" value="1"/>
</dbReference>
<dbReference type="Pfam" id="PF00406">
    <property type="entry name" value="ADK"/>
    <property type="match status" value="1"/>
</dbReference>
<dbReference type="PRINTS" id="PR00094">
    <property type="entry name" value="ADENYLTKNASE"/>
</dbReference>
<dbReference type="SUPFAM" id="SSF52540">
    <property type="entry name" value="P-loop containing nucleoside triphosphate hydrolases"/>
    <property type="match status" value="1"/>
</dbReference>
<dbReference type="PROSITE" id="PS00113">
    <property type="entry name" value="ADENYLATE_KINASE"/>
    <property type="match status" value="1"/>
</dbReference>
<protein>
    <recommendedName>
        <fullName evidence="4">UMP-CMP kinase</fullName>
        <ecNumber evidence="4">2.7.4.14</ecNumber>
    </recommendedName>
    <alternativeName>
        <fullName evidence="4">Deoxycytidylate kinase</fullName>
        <shortName evidence="4">CK</shortName>
        <shortName evidence="4">dCMP kinase</shortName>
    </alternativeName>
    <alternativeName>
        <fullName evidence="4">Nucleoside-diphosphate kinase</fullName>
        <ecNumber evidence="4">2.7.4.6</ecNumber>
    </alternativeName>
    <alternativeName>
        <fullName evidence="4">Uridine monophosphate/cytidine monophosphate kinase</fullName>
        <shortName evidence="4">UMP/CMP kinase</shortName>
        <shortName evidence="4">UMP/CMPK</shortName>
    </alternativeName>
</protein>
<name>KCY_BOVIN</name>
<reference key="1">
    <citation type="submission" date="2006-01" db="EMBL/GenBank/DDBJ databases">
        <authorList>
            <consortium name="NIH - Mammalian Gene Collection (MGC) project"/>
        </authorList>
    </citation>
    <scope>NUCLEOTIDE SEQUENCE [LARGE SCALE MRNA]</scope>
    <source>
        <strain>Hereford</strain>
        <tissue>Testis</tissue>
    </source>
</reference>
<sequence length="196" mass="22279">MKPQVVFVLGGPGAGKGTQCARIVEKYGYTHLSAGELLRDERKNPDSQYGELIEKYIKDGKIVPVEITISLLRREMDQTMAANAQKNKFLIDGFPRNQDNLQGWNKTMDGKADVSFVLFFDCNNEICIERCLERGKSSGRSDDNRESLEKRIQTYLQSTKPIIDLYEEMGKVRKIDASKSVDEVFDEVVKIFDKEG</sequence>
<accession>Q2KIW9</accession>